<proteinExistence type="evidence at protein level"/>
<protein>
    <recommendedName>
        <fullName evidence="12">Trimeric autotransporter adhesin AtaA</fullName>
        <shortName evidence="13">TAA AtaA</shortName>
    </recommendedName>
    <alternativeName>
        <fullName evidence="13">Type 5 secretion system autotransporter AtaA</fullName>
    </alternativeName>
</protein>
<gene>
    <name evidence="12" type="primary">ataA</name>
</gene>
<feature type="signal peptide" evidence="3">
    <location>
        <begin position="1"/>
        <end position="23"/>
    </location>
</feature>
<feature type="chain" id="PRO_0000450745" description="Trimeric autotransporter adhesin AtaA">
    <location>
        <begin position="24"/>
        <end position="3630"/>
    </location>
</feature>
<feature type="transmembrane region" description="Beta stranded" evidence="1">
    <location>
        <begin position="3575"/>
        <end position="3585"/>
    </location>
</feature>
<feature type="transmembrane region" description="Beta stranded" evidence="1">
    <location>
        <begin position="3589"/>
        <end position="3599"/>
    </location>
</feature>
<feature type="transmembrane region" description="Beta stranded" evidence="1">
    <location>
        <begin position="3608"/>
        <end position="3614"/>
    </location>
</feature>
<feature type="transmembrane region" description="Beta stranded" evidence="1">
    <location>
        <begin position="3618"/>
        <end position="3629"/>
    </location>
</feature>
<feature type="region of interest" description="Surface exposed passenger domain" evidence="9">
    <location>
        <begin position="24"/>
        <end position="3487"/>
    </location>
</feature>
<feature type="region of interest" description="N-terminal YadA-like head" evidence="16">
    <location>
        <begin position="108"/>
        <end position="315"/>
    </location>
</feature>
<feature type="region of interest" description="N-terminal stalk" evidence="16">
    <location>
        <begin position="316"/>
        <end position="2904"/>
    </location>
</feature>
<feature type="region of interest" description="C-terminal YadA-like head" evidence="16">
    <location>
        <begin position="2905"/>
        <end position="3169"/>
    </location>
</feature>
<feature type="region of interest" description="C-terminal stalk" evidence="16">
    <location>
        <begin position="3170"/>
        <end position="3561"/>
    </location>
</feature>
<feature type="region of interest" description="Outer membrane translocation of the passenger domain" evidence="1">
    <location>
        <begin position="3539"/>
        <end position="3574"/>
    </location>
</feature>
<feature type="region of interest" description="Translocator domain" evidence="1">
    <location>
        <begin position="3575"/>
        <end position="3630"/>
    </location>
</feature>
<feature type="mutagenesis site" description="Protein expressed on cell surface, autoagglutination and adherence to glass and polystyrene is normal." evidence="9">
    <location>
        <begin position="326"/>
        <end position="362"/>
    </location>
</feature>
<feature type="mutagenesis site" description="Protein is expressed, but not present on the cell surface, loss of autoagglutination and adherence." evidence="9">
    <location>
        <begin position="328"/>
        <end position="362"/>
    </location>
</feature>
<feature type="mutagenesis site" description="Protein expressed on cell surface, decreased autoagglutination, decreased adherence to glass and polystyrene, isolated fiber has slightly altered morphology." evidence="9">
    <location>
        <begin position="335"/>
        <end position="362"/>
    </location>
</feature>
<feature type="mutagenesis site" description="Protects recombinant proteins from degradation in vivo." evidence="7">
    <original>P</original>
    <variation>G</variation>
    <location>
        <position position="3061"/>
    </location>
</feature>
<feature type="mutagenesis site" description="Inserts a protease site, allows isolation of the intact, folded passenger domain. Protein behaves like wild-type." evidence="9">
    <original>G</original>
    <variation>GGGLEVLFLQGPG</variation>
    <location>
        <position position="3487"/>
    </location>
</feature>
<feature type="helix" evidence="24">
    <location>
        <begin position="2905"/>
        <end position="2912"/>
    </location>
</feature>
<feature type="strand" evidence="24">
    <location>
        <begin position="2913"/>
        <end position="2915"/>
    </location>
</feature>
<feature type="strand" evidence="24">
    <location>
        <begin position="2921"/>
        <end position="2923"/>
    </location>
</feature>
<feature type="helix" evidence="24">
    <location>
        <begin position="2924"/>
        <end position="2928"/>
    </location>
</feature>
<feature type="strand" evidence="24">
    <location>
        <begin position="2943"/>
        <end position="2945"/>
    </location>
</feature>
<feature type="strand" evidence="24">
    <location>
        <begin position="2947"/>
        <end position="2950"/>
    </location>
</feature>
<feature type="strand" evidence="24">
    <location>
        <begin position="2952"/>
        <end position="2954"/>
    </location>
</feature>
<feature type="helix" evidence="24">
    <location>
        <begin position="2958"/>
        <end position="2968"/>
    </location>
</feature>
<feature type="strand" evidence="24">
    <location>
        <begin position="2983"/>
        <end position="2987"/>
    </location>
</feature>
<feature type="strand" evidence="24">
    <location>
        <begin position="2998"/>
        <end position="3001"/>
    </location>
</feature>
<feature type="strand" evidence="24">
    <location>
        <begin position="3014"/>
        <end position="3017"/>
    </location>
</feature>
<feature type="strand" evidence="24">
    <location>
        <begin position="3028"/>
        <end position="3033"/>
    </location>
</feature>
<feature type="strand" evidence="24">
    <location>
        <begin position="3042"/>
        <end position="3047"/>
    </location>
</feature>
<feature type="strand" evidence="24">
    <location>
        <begin position="3056"/>
        <end position="3061"/>
    </location>
</feature>
<feature type="strand" evidence="24">
    <location>
        <begin position="3066"/>
        <end position="3068"/>
    </location>
</feature>
<feature type="strand" evidence="24">
    <location>
        <begin position="3070"/>
        <end position="3075"/>
    </location>
</feature>
<feature type="strand" evidence="24">
    <location>
        <begin position="3080"/>
        <end position="3082"/>
    </location>
</feature>
<feature type="strand" evidence="24">
    <location>
        <begin position="3084"/>
        <end position="3089"/>
    </location>
</feature>
<feature type="strand" evidence="24">
    <location>
        <begin position="3098"/>
        <end position="3101"/>
    </location>
</feature>
<feature type="helix" evidence="24">
    <location>
        <begin position="3122"/>
        <end position="3130"/>
    </location>
</feature>
<feature type="strand" evidence="24">
    <location>
        <begin position="3138"/>
        <end position="3140"/>
    </location>
</feature>
<feature type="helix" evidence="24">
    <location>
        <begin position="3143"/>
        <end position="3145"/>
    </location>
</feature>
<feature type="helix" evidence="27">
    <location>
        <begin position="3170"/>
        <end position="3187"/>
    </location>
</feature>
<feature type="strand" evidence="27">
    <location>
        <begin position="3211"/>
        <end position="3213"/>
    </location>
</feature>
<feature type="helix" evidence="25">
    <location>
        <begin position="3214"/>
        <end position="3231"/>
    </location>
</feature>
<feature type="strand" evidence="27">
    <location>
        <begin position="3235"/>
        <end position="3238"/>
    </location>
</feature>
<feature type="strand" evidence="25">
    <location>
        <begin position="3242"/>
        <end position="3248"/>
    </location>
</feature>
<feature type="strand" evidence="25">
    <location>
        <begin position="3254"/>
        <end position="3260"/>
    </location>
</feature>
<feature type="strand" evidence="27">
    <location>
        <begin position="3262"/>
        <end position="3265"/>
    </location>
</feature>
<feature type="strand" evidence="25">
    <location>
        <begin position="3267"/>
        <end position="3271"/>
    </location>
</feature>
<feature type="strand" evidence="25">
    <location>
        <begin position="3274"/>
        <end position="3277"/>
    </location>
</feature>
<feature type="strand" evidence="25">
    <location>
        <begin position="3280"/>
        <end position="3283"/>
    </location>
</feature>
<feature type="turn" evidence="25">
    <location>
        <begin position="3284"/>
        <end position="3287"/>
    </location>
</feature>
<feature type="strand" evidence="25">
    <location>
        <begin position="3288"/>
        <end position="3291"/>
    </location>
</feature>
<feature type="strand" evidence="25">
    <location>
        <begin position="3294"/>
        <end position="3297"/>
    </location>
</feature>
<feature type="strand" evidence="25">
    <location>
        <begin position="3302"/>
        <end position="3304"/>
    </location>
</feature>
<feature type="strand" evidence="25">
    <location>
        <begin position="3307"/>
        <end position="3309"/>
    </location>
</feature>
<feature type="strand" evidence="27">
    <location>
        <begin position="3315"/>
        <end position="3318"/>
    </location>
</feature>
<feature type="helix" evidence="25">
    <location>
        <begin position="3330"/>
        <end position="3350"/>
    </location>
</feature>
<feature type="strand" evidence="26">
    <location>
        <begin position="3361"/>
        <end position="3363"/>
    </location>
</feature>
<feature type="strand" evidence="26">
    <location>
        <begin position="3371"/>
        <end position="3374"/>
    </location>
</feature>
<feature type="helix" evidence="25">
    <location>
        <begin position="3391"/>
        <end position="3417"/>
    </location>
</feature>
<feature type="strand" evidence="25">
    <location>
        <begin position="3420"/>
        <end position="3427"/>
    </location>
</feature>
<feature type="strand" evidence="25">
    <location>
        <begin position="3432"/>
        <end position="3435"/>
    </location>
</feature>
<feature type="strand" evidence="26">
    <location>
        <begin position="3441"/>
        <end position="3444"/>
    </location>
</feature>
<feature type="strand" evidence="26">
    <location>
        <begin position="3452"/>
        <end position="3457"/>
    </location>
</feature>
<feature type="helix" evidence="25">
    <location>
        <begin position="3472"/>
        <end position="3486"/>
    </location>
</feature>
<feature type="strand" evidence="25">
    <location>
        <begin position="3491"/>
        <end position="3493"/>
    </location>
</feature>
<feature type="turn" evidence="25">
    <location>
        <begin position="3494"/>
        <end position="3497"/>
    </location>
</feature>
<feature type="strand" evidence="25">
    <location>
        <begin position="3498"/>
        <end position="3500"/>
    </location>
</feature>
<feature type="strand" evidence="25">
    <location>
        <begin position="3504"/>
        <end position="3506"/>
    </location>
</feature>
<feature type="strand" evidence="25">
    <location>
        <begin position="3509"/>
        <end position="3513"/>
    </location>
</feature>
<feature type="helix" evidence="25">
    <location>
        <begin position="3514"/>
        <end position="3544"/>
    </location>
</feature>
<feature type="helix" evidence="25">
    <location>
        <begin position="3545"/>
        <end position="3548"/>
    </location>
</feature>
<comment type="function">
    <text evidence="4 5 9 10 11">Responsible for autoagglutination, and for adhesion to abiotic and biotic surfaces such as polystyrene (PS), type I collagen, polypropylene (PP), polyvinylchloride (PVC), glass and stainless steel (SS). Adhesion is much stronger than that mediated by Yersinia YadA in a comparative assay. Confers autoagglutination and binding to PS, type I collagen, PP, PVC, glass and SS upon expression in Acinetobacter baylyi strain ADP1 (PubMed:23155410). Involved in rapid, irreversible adherence to polyurethane (PubMed:17090933). Forms an unusual biofilm (PubMed:31972092). An extended, surface exposed fiber binds to quartz crystals, PS and glass. It can be removed by washing in distilled water (PubMed:27305955, PubMed:28720107).</text>
</comment>
<comment type="subunit">
    <text evidence="7 8 17">Homotrimer (Probable) (PubMed:26698633). Interacts with TpgA (PubMed:27074146).</text>
</comment>
<comment type="subcellular location">
    <subcellularLocation>
        <location evidence="5 8 9">Cell surface</location>
    </subcellularLocation>
    <subcellularLocation>
        <location evidence="5 8">Cell outer membrane</location>
        <topology evidence="1">Multi-pass membrane protein</topology>
    </subcellularLocation>
    <text evidence="5 8 15">Localizes to thin, peritrichate nanofibers (200 nm long, 3.5 nm diameter) on the cell surface; an antibody against residues 699-1014 only labels the distal tip of these fibers (PubMed:23155410, PubMed:27074146). The C-terminal translocator domain is probably localized in the outer membrane (Probable).</text>
</comment>
<comment type="induction">
    <text evidence="8">Part of the ataA-tpgA operon.</text>
</comment>
<comment type="domain">
    <text evidence="2 7 9 16">The signal peptide, cleaved at the inner membrane, guides the autotransporter protein to the periplasmic space. Then, trimerization and insertion of the C-terminal translocator domain in the outer membrane forms a hydrophilic pore for the translocation of the passenger domain to the bacterial cell surface (By similarity). Seems to have 2 tandemly fused passenger domains; a long N-terminal one (residues 59-2904) and a shorter C-terminal one (residues 2905-3561) (Probable). The C-terminal passenger domain is an entwined, elongated trimer about 450 Angstroms in length that is rigid and yet able to bend somewhat. The ability to bind biotic and abiotic substrates lies in the N-terminal passenger domain (PubMed:26698633). The isolated, trimeric, passenger domain (residues 24-3487) forms fibers 225 nm in length, 4 nm in diameter and has a globular structure at both its N-terminus and near its C-terminus. Its secondary structure is resistant to heat up to 80 degrees Celsius, to treatment at pH 2 and 12, as well as incubation in 0.1 M HCl. The intact fibers adhere rapidly to a quartz crystal microbalance system; heat denatured fibers bind less well as their secondary structure decreases (PubMed:27305955). Targeted small domain deletions show the fine ultrastructure of the fiber (PubMed:27305955).</text>
</comment>
<comment type="disruption phenotype">
    <text evidence="4 5">Loss of rapid, irreversible adhesion to polyurethane, loss of both an anchor-like appendage and a peritrichate fibril-type appendage on the cell surface (PubMed:17090933, PubMed:23155410). Cells retain type 1 and Fil fimbriae (defined by FimA and FilA protein respectively) (PubMed:23155410).</text>
</comment>
<comment type="biotechnology">
    <text evidence="6 10">Can be used to immobilize bacteria on a solid support; cells can be removed by washing in distilled water, and will reattach as the ionic strength of the medium increases above 10 mM. The attach-detach cycle can be repeated at least 4 times, each time the cells reattach as well as the first time (PubMed:23893702, PubMed:28720107). Expression in the indigo-producing Acinetobacter strain ST-550 leads to cell adherence to a support material and subsequently 5-fold increased levels of indigo production (PubMed:23893702).</text>
</comment>
<comment type="miscellaneous">
    <text evidence="9">Insertion of a human rhinovirus protease 3C site allows isolation of the intact, folded passenger domain after protease treatment of whole cells. The protease cuts in the tag as indicated GGGLEVLFLQ|GPG.</text>
</comment>
<comment type="similarity">
    <text evidence="14">Belongs to the autotransporter-2 (AT-2) (TC 1.B.40) family.</text>
</comment>
<organism>
    <name type="scientific">Acinetobacter sp. (strain Tol 5)</name>
    <dbReference type="NCBI Taxonomy" id="710648"/>
    <lineage>
        <taxon>Bacteria</taxon>
        <taxon>Pseudomonadati</taxon>
        <taxon>Pseudomonadota</taxon>
        <taxon>Gammaproteobacteria</taxon>
        <taxon>Moraxellales</taxon>
        <taxon>Moraxellaceae</taxon>
        <taxon>Acinetobacter</taxon>
    </lineage>
</organism>
<accession>K7ZP88</accession>
<dbReference type="EMBL" id="AB542908">
    <property type="protein sequence ID" value="BAM68255.1"/>
    <property type="molecule type" value="Genomic_DNA"/>
</dbReference>
<dbReference type="RefSeq" id="WP_228740304.1">
    <property type="nucleotide sequence ID" value="NZ_AP024708.1"/>
</dbReference>
<dbReference type="PDB" id="3WP8">
    <property type="method" value="X-ray"/>
    <property type="resolution" value="1.97 A"/>
    <property type="chains" value="A=2905-3168"/>
</dbReference>
<dbReference type="PDB" id="3WPA">
    <property type="method" value="X-ray"/>
    <property type="resolution" value="1.79 A"/>
    <property type="chains" value="A=3170-3561"/>
</dbReference>
<dbReference type="PDB" id="3WPO">
    <property type="method" value="X-ray"/>
    <property type="resolution" value="2.40 A"/>
    <property type="chains" value="A/B/C=3334-3474"/>
</dbReference>
<dbReference type="PDB" id="3WPP">
    <property type="method" value="X-ray"/>
    <property type="resolution" value="1.95 A"/>
    <property type="chains" value="A=3334-3474"/>
</dbReference>
<dbReference type="PDB" id="3WPR">
    <property type="method" value="X-ray"/>
    <property type="resolution" value="1.90 A"/>
    <property type="chains" value="A/B/C=3170-3332"/>
</dbReference>
<dbReference type="PDB" id="3WQA">
    <property type="method" value="X-ray"/>
    <property type="resolution" value="2.40 A"/>
    <property type="chains" value="A/B/C=3334-3474"/>
</dbReference>
<dbReference type="PDBsum" id="3WP8"/>
<dbReference type="PDBsum" id="3WPA"/>
<dbReference type="PDBsum" id="3WPO"/>
<dbReference type="PDBsum" id="3WPP"/>
<dbReference type="PDBsum" id="3WPR"/>
<dbReference type="PDBsum" id="3WQA"/>
<dbReference type="SMR" id="K7ZP88"/>
<dbReference type="KEGG" id="ag:BAM68255"/>
<dbReference type="EvolutionaryTrace" id="K7ZP88"/>
<dbReference type="GO" id="GO:0009279">
    <property type="term" value="C:cell outer membrane"/>
    <property type="evidence" value="ECO:0007669"/>
    <property type="project" value="UniProtKB-SubCell"/>
</dbReference>
<dbReference type="GO" id="GO:0009986">
    <property type="term" value="C:cell surface"/>
    <property type="evidence" value="ECO:0007669"/>
    <property type="project" value="UniProtKB-SubCell"/>
</dbReference>
<dbReference type="GO" id="GO:0007155">
    <property type="term" value="P:cell adhesion"/>
    <property type="evidence" value="ECO:0007669"/>
    <property type="project" value="UniProtKB-KW"/>
</dbReference>
<dbReference type="GO" id="GO:0015031">
    <property type="term" value="P:protein transport"/>
    <property type="evidence" value="ECO:0007669"/>
    <property type="project" value="UniProtKB-KW"/>
</dbReference>
<dbReference type="CDD" id="cd12820">
    <property type="entry name" value="LbR_YadA-like"/>
    <property type="match status" value="2"/>
</dbReference>
<dbReference type="Gene3D" id="1.20.5.170">
    <property type="match status" value="4"/>
</dbReference>
<dbReference type="Gene3D" id="1.20.5.2280">
    <property type="match status" value="1"/>
</dbReference>
<dbReference type="Gene3D" id="2.20.70.140">
    <property type="match status" value="4"/>
</dbReference>
<dbReference type="Gene3D" id="6.10.250.2040">
    <property type="match status" value="1"/>
</dbReference>
<dbReference type="Gene3D" id="2.150.10.10">
    <property type="entry name" value="Serralysin-like metalloprotease, C-terminal"/>
    <property type="match status" value="3"/>
</dbReference>
<dbReference type="InterPro" id="IPR008640">
    <property type="entry name" value="Adhesin_Head_dom"/>
</dbReference>
<dbReference type="InterPro" id="IPR008635">
    <property type="entry name" value="Coiled_stalk_dom"/>
</dbReference>
<dbReference type="InterPro" id="IPR024973">
    <property type="entry name" value="ESPR"/>
</dbReference>
<dbReference type="InterPro" id="IPR045584">
    <property type="entry name" value="Pilin-like"/>
</dbReference>
<dbReference type="InterPro" id="IPR011049">
    <property type="entry name" value="Serralysin-like_metalloprot_C"/>
</dbReference>
<dbReference type="InterPro" id="IPR005594">
    <property type="entry name" value="YadA_C"/>
</dbReference>
<dbReference type="Pfam" id="PF13018">
    <property type="entry name" value="ESPR"/>
    <property type="match status" value="1"/>
</dbReference>
<dbReference type="Pfam" id="PF03895">
    <property type="entry name" value="YadA_anchor"/>
    <property type="match status" value="1"/>
</dbReference>
<dbReference type="Pfam" id="PF05658">
    <property type="entry name" value="YadA_head"/>
    <property type="match status" value="5"/>
</dbReference>
<dbReference type="Pfam" id="PF05662">
    <property type="entry name" value="YadA_stalk"/>
    <property type="match status" value="9"/>
</dbReference>
<dbReference type="SUPFAM" id="SSF101967">
    <property type="entry name" value="Adhesin YadA, collagen-binding domain"/>
    <property type="match status" value="3"/>
</dbReference>
<dbReference type="SUPFAM" id="SSF54523">
    <property type="entry name" value="Pili subunits"/>
    <property type="match status" value="1"/>
</dbReference>
<sequence length="3630" mass="359309">MNKIYKVIWNATLLAWVAVSELAKGKTKSTTSKSKAKSLSSSVIVGGIILTTPLSLIAATVQVGGGTNSGTTATASTNCADLYNYQNPENSGSGAAGNYNAGNPSVCSIAIGENAQGGTSGTGGSPGIAIGGNSKATGGLSVAIGGYAQATNVGSIALGTAALSSGFNSLAISRQAAATNNYSIAIGTTSVSKGVGSIAMGHSTNASGDQSIAIGSSDAVNSATATTTYDGTTNTQASGSKSIAIGASAKASTNNSIALGAGSVTSAQSGNSYLTGVGASATNGVVSVGTSTATRRIQNVADGSAASDAVTVAQLDKAYDDTNGRLAAALGTGSGAAYNAANNTYTAPTNIGGTGKNTIDDAIKATQRSVVAGSNIVVTPTTASDGSISYSVATSATPTFTSITVNNAPTAGTDATNKTYVDSKAAASRTEVAAGSNVSGVVKTTGANGQDVYTVNANGTTASAGSSAVTVTPGTKDANNVTDYKVDLSATTKTDIQKGVDAKNAVDTAGLKFKGDTATTSNTKKLGDTVSITGDTNISTVATTDGVQVKLNPNLDLGATGSVKTGNTTINNAGVTADQVTVGGVVINNTSGINAGGKAITNVAAPTNNTDAANKKYVDDAGTALTNLGFGLKAQDGTTVNKKLGEAVDIVGSNSNISTKVNAGKVEVALSNTLDLGTTGSVTTGSTVINNAGVTATQVTANKVTINNAPTAGTDATNKTYVDSKAAASRTEVAAGSNVSGVVKTTGANGQDIYAVNANGTTASAGSSAVTVTPGTKDANNVTDYKVDLSATTKTDIQKGVDAKNAVDTAGLKFKGDTATTSNTKKLGDTVSITGDTNISTVATTDGVQVKLNPNLDLGATGSVKTGNTTINNAGVTADQVTVGGVVINNTSGINAGGKAITNVAAPTNNTDAANKKYVDDAGTALTNLGFGLKAQDGTTVNKKLGEAVDIVGSNSNISTKVNAGKVEVALSNTLDLGTTGSVTTGSTVINNAGVTATQVTANKVTVNNAPTAGTDATNKTYVDSKAAASRTEVAAGSNVSGVVKTTGANGQDVYTVNANGTTASAGSSAVTVTPGTKDANNVTDYKVDLSATTKTDIQKGVDAKNAVDTAGLKFKGDTATTSNTKKLGDTVSITGDTNISTVATTDGVQVKLNPNLDLGATGSVKTGNTTINNAGVTADQVTVGGVVINNTSGINAGGKAITNVAAPTNNTDAANKKYVDDAGTALTNLGFGLKAQDGTTVNKKLGEAVEVVGADSNITTKVAGGQVAIELNKNLNNLTGITVNDGTNGTNGSTVIGKDGISVKDGSGNTIAGVDNTALTVKDGSGNTETSINQAINTLNAAQGETDKFAVKYDKNADGSVNYNNITLAGTTASSTQDATTGKITTTGGTSLNNVASAGDYKDVANASKGVNAGDLNNAVVDATNAATSKGFALQAADGAKVQKNLGEAVEVVGADSNITTKVAGGQVAIELNKNLNNLTGITVNDGTNGTNGSTVIGKDGISVKDGSGNTIAGVDNTALTVKDGSGNTETSINQAINTLNAAQGETDKFAVKYDKNTDGSTNYNSITAGNGNGTAATIGTDTAGNSVVTSGGTKISNVANGVNASDAVNKGQLDSLSTGLTNTGFGLKAADGNTVNKKLGEAVDVVGADSNITTKVAGGQVAIELNKNLNNLTGITVNDGTNGTNGSTVIGKDGISIKDGSGNTIAGVDNTALTVKDGSGNTETSINQAINTLNAAQGETDKFAVKYDKNADGSANYNNITLAGTTASSTQDATTGKITTTGGTSLNNVASAGDYKDVANASKGVNAGDLNNAVVDATNAATSKGFALQAADGAKVQKNLGEAVEVVGADSNITTKVVGGQVAIELNKNLNNLTGITVNDGTNGTNGSTVIGKDGISVKDGSGNTIAGVDNTALTVKDGSGNTETSINQAINTLNAAQGETDKFAVKYDKNADGSVNYNNITLAGTTASSTQDATTGKITTTGGTSLNNVASAGDYKDVANASKGVNAGDLNNAVVDATNAATSKGFALQAADGAKVQKNLGEAVEVVGADSNITTKVAGGQVAIELNKNLNNLTGITVNDGTNGTNGSTVIGKDGISVKDGSGNTIAGVDNTALTVKDGSGNTETSINQAINTLNAAQGETDKFAVKYDKNADGSVNYNNITLAGTTASSTQDATTGKITTTGGTSLNNVASAGDYKDVANASKGVNAGDLNNAVVDATNAATSKGFALQAADGAKVQKNLGEAVEVVGADSNITTKVAGGQVAIELNKNLNNLTGITVNDGTNGTNGSTVIGKDGISVKDGSGNTIAGVDNTALTVKDGSGNTETSINQAINTLNAAQGETDKFAVKYDKNADGSANYNNVTLAGTNGTIISNVKAGAVTSTSTDAINGSQLYGVANSVKNAIGGSTTIDATTGAITTTNIGGTGSNTIDGAISSIKDSATKAKTTVSAGDNVVVTSGTNADGSTNYEVATAKDVNFDKVTVGSVVVDKSSNTIKGLSNTTWNGTAVSGQAATEDQLKTVSDAQGETDKFAVKYDKNADGSANYNSITAGNGNGTAATIGTDTAGNSVVTSGGTKISNVANGVNASDAVNKGQLDSLSTGLTNTGFGLKAADGNTVNKKLGEAVDVVGADSNITTKVAGGQVAIELNKNLNNLTGITVNDGTNGTNGSTVIGKDGISIKDGSGNTIAGVDNTALTVKDSSGNTETSINQAINTLNAAQGETDKFAVKYDKNADGSVNYNNVTLAGTNGTIIRNVKAGAVTSTSTDAINGSQLYDIANSVKNAIGGSTTRDVTTGAITTTNIGGTGSNTIDGAISSIKDSATKAKTTISAGDNVVVTSGTNADGSTNYEVATAKDVNFDKVTVGNVVVDKANDTIQGLSNKDLNSTDFATKGRAATEEQLKAVITSNITEVVDGNGNKVNIIDQVVNTKPDNKNQDSLFLTYDKQGQETTDRLTIGQTVQKMNTDGIKFFHTNADTSKGDLGTTNDSSAGGLNSTAIGVNAIVANGADSSVALGHNTKVNGKQSIAIGSGAEALGNQSISIGTGNKVTGDHSGAIGDPTIVNGANSYSVGNNNQVLTDDTFVLGNNVTKTIAGSVVLGNGSAATTGAGEAGYALSVATNADKAAITKTTSSTGAVAVGDASSGIYRQITGVAAGSVDSDAVNVAQLKAVGNQVVTTQTTLVNSLGGNAKVNADGTITGPTYNVAQGNQTNVGDALTALDNAINTAATTSKSTVSNGQNIVVSKSKNADGSDNYEVSTAKDLTVDSVKAGDTVLNNAGITIGNNAVVLNNTGLTISGGPSVTLAGIDAGNKTIQNVANAVNATDAVNKGQLDSAINNVNNNVNELANNAVKYDDASKDKITLGGGATGTTITNVKDGTVAQGSKDAVNGGQLWNVQQQVDQNTTDISNIKNDINNGTVGLVQQAGKDAPVTVAKDTGGTTVNVAGTDGNRVVTGVKEGAVNATSKDAVNGSQLNTTNQAVVNYLGGGAGYDNITGSFTAPSYTVGDSKYNNVGGAIDALNQADQALNSKIDNVSNKLDNAFRITNNRIDDVEKKANAGIAAAMALESAPYVPGKYTYAAGAAYHGGENAVGVTLRKTADNGRWSITGGVAAASQGDASVRIGISGVID</sequence>
<evidence type="ECO:0000250" key="1">
    <source>
        <dbReference type="UniProtKB" id="A1JUB7"/>
    </source>
</evidence>
<evidence type="ECO:0000250" key="2">
    <source>
        <dbReference type="UniProtKB" id="P0C2W0"/>
    </source>
</evidence>
<evidence type="ECO:0000255" key="3"/>
<evidence type="ECO:0000269" key="4">
    <source>
    </source>
</evidence>
<evidence type="ECO:0000269" key="5">
    <source>
    </source>
</evidence>
<evidence type="ECO:0000269" key="6">
    <source>
    </source>
</evidence>
<evidence type="ECO:0000269" key="7">
    <source>
    </source>
</evidence>
<evidence type="ECO:0000269" key="8">
    <source>
    </source>
</evidence>
<evidence type="ECO:0000269" key="9">
    <source>
    </source>
</evidence>
<evidence type="ECO:0000269" key="10">
    <source>
    </source>
</evidence>
<evidence type="ECO:0000269" key="11">
    <source>
    </source>
</evidence>
<evidence type="ECO:0000303" key="12">
    <source>
    </source>
</evidence>
<evidence type="ECO:0000303" key="13">
    <source>
    </source>
</evidence>
<evidence type="ECO:0000305" key="14"/>
<evidence type="ECO:0000305" key="15">
    <source>
    </source>
</evidence>
<evidence type="ECO:0000305" key="16">
    <source>
    </source>
</evidence>
<evidence type="ECO:0000305" key="17">
    <source>
    </source>
</evidence>
<evidence type="ECO:0007744" key="18">
    <source>
        <dbReference type="PDB" id="3WP8"/>
    </source>
</evidence>
<evidence type="ECO:0007744" key="19">
    <source>
        <dbReference type="PDB" id="3WPA"/>
    </source>
</evidence>
<evidence type="ECO:0007744" key="20">
    <source>
        <dbReference type="PDB" id="3WPO"/>
    </source>
</evidence>
<evidence type="ECO:0007744" key="21">
    <source>
        <dbReference type="PDB" id="3WPP"/>
    </source>
</evidence>
<evidence type="ECO:0007744" key="22">
    <source>
        <dbReference type="PDB" id="3WPR"/>
    </source>
</evidence>
<evidence type="ECO:0007744" key="23">
    <source>
        <dbReference type="PDB" id="3WQA"/>
    </source>
</evidence>
<evidence type="ECO:0007829" key="24">
    <source>
        <dbReference type="PDB" id="3WP8"/>
    </source>
</evidence>
<evidence type="ECO:0007829" key="25">
    <source>
        <dbReference type="PDB" id="3WPA"/>
    </source>
</evidence>
<evidence type="ECO:0007829" key="26">
    <source>
        <dbReference type="PDB" id="3WPO"/>
    </source>
</evidence>
<evidence type="ECO:0007829" key="27">
    <source>
        <dbReference type="PDB" id="3WPR"/>
    </source>
</evidence>
<reference key="1">
    <citation type="journal article" date="2012" name="PLoS ONE">
        <title>AtaA, a New Member of the Trimeric Autotransporter Adhesins from Acinetobacter sp. Tol 5 Mediating High Adhesiveness to Various Abiotic Surfaces.</title>
        <authorList>
            <person name="Ishikawa M."/>
            <person name="Nakatani H."/>
            <person name="Hori K."/>
        </authorList>
    </citation>
    <scope>NUCLEOTIDE SEQUENCE [GENOMIC DNA]</scope>
    <scope>FUNCTION</scope>
    <scope>SUBCELLULAR LOCATION</scope>
    <scope>DISRUPTION PHENOTYPE</scope>
    <source>
        <strain>Tol 5</strain>
    </source>
</reference>
<reference key="2">
    <citation type="journal article" date="2006" name="Biosci. Biotechnol. Biochem.">
        <title>Effect of cell appendages on the adhesion properties of a highly adhesive bacterium, Acinetobacter sp. Tol 5.</title>
        <authorList>
            <person name="Ishii S."/>
            <person name="Unno H."/>
            <person name="Miyata S."/>
            <person name="Hori K."/>
        </authorList>
    </citation>
    <scope>FUNCTION</scope>
    <scope>DISRUPTION PHENOTYPE</scope>
    <source>
        <strain>Tol 5</strain>
    </source>
</reference>
<reference key="3">
    <citation type="journal article" date="2014" name="Biotechnol. Bioeng.">
        <title>Application of the adhesive bacterionanofiber AtaA to a novel microbial immobilization method for the production of indigo as a model chemical.</title>
        <authorList>
            <person name="Ishikawa M."/>
            <person name="Shigemori K."/>
            <person name="Hori K."/>
        </authorList>
    </citation>
    <scope>BIOTECHNOLOGY</scope>
    <source>
        <strain>Tol 5</strain>
    </source>
</reference>
<reference key="4">
    <citation type="journal article" date="2016" name="Mol. Microbiol.">
        <title>Discovery of a novel periplasmic protein that forms a complex with a trimeric autotransporter adhesin and peptidoglycan.</title>
        <authorList>
            <person name="Ishikawa M."/>
            <person name="Yoshimoto S."/>
            <person name="Hayashi A."/>
            <person name="Kanie J."/>
            <person name="Hori K."/>
        </authorList>
    </citation>
    <scope>INTERACTION WITH TPGA</scope>
    <scope>SUBCELLULAR LOCATION</scope>
    <scope>OPERON</scope>
</reference>
<reference key="5">
    <citation type="journal article" date="2016" name="Sci. Rep.">
        <title>An Acinetobacter trimeric autotransporter adhesin reaped from cells exhibits its nonspecific stickiness via a highly stable 3D structure.</title>
        <authorList>
            <person name="Yoshimoto S."/>
            <person name="Nakatani H."/>
            <person name="Iwasaki K."/>
            <person name="Hori K."/>
        </authorList>
    </citation>
    <scope>FUNCTION</scope>
    <scope>SUBUNIT</scope>
    <scope>SUBCELLULAR LOCATION</scope>
    <scope>DOMAIN</scope>
    <scope>MUTAGENESIS OF GLY-3487</scope>
    <source>
        <strain>Tol 5</strain>
    </source>
</reference>
<reference key="6">
    <citation type="journal article" date="2017" name="Microb. Cell Fact.">
        <title>Reversible bacterial immobilization based on the salt-dependent adhesion of the bacterionanofiber protein AtaA.</title>
        <authorList>
            <person name="Yoshimoto S."/>
            <person name="Ohara Y."/>
            <person name="Nakatani H."/>
            <person name="Hori K."/>
        </authorList>
    </citation>
    <scope>BIOTECHNOLOGY</scope>
    <source>
        <strain>Tol 5</strain>
    </source>
</reference>
<reference key="7">
    <citation type="journal article" date="2020" name="J. Biosci. Bioeng.">
        <title>Native display of a huge homotrimeric protein fiber on the cell surface after precise domain deletion.</title>
        <authorList>
            <person name="Aoki S."/>
            <person name="Yoshimoto S."/>
            <person name="Ishikawa M."/>
            <person name="Linke D."/>
            <person name="Lupas A."/>
            <person name="Hori K."/>
        </authorList>
    </citation>
    <scope>DOMAIN</scope>
    <scope>MUTAGENESIS BY DOMAIN DELETION</scope>
    <source>
        <strain>Tol 5</strain>
    </source>
</reference>
<reference key="8">
    <citation type="journal article" date="2020" name="Environ. Sci. Technol.">
        <title>Process Description of an Unconventional Biofilm Formation by Bacterial Cells Autoagglutinating through Sticky, Long, and Peritrichate Nanofibers.</title>
        <authorList>
            <person name="Furuichi Y."/>
            <person name="Yoshimoto S."/>
            <person name="Inaba T."/>
            <person name="Nomura N."/>
            <person name="Hori K."/>
        </authorList>
    </citation>
    <scope>FUNCTION IN BIOFILM FORMATION</scope>
    <source>
        <strain>Tol 5</strain>
    </source>
</reference>
<reference evidence="18 19 20 21 22 23" key="9">
    <citation type="journal article" date="2016" name="J. Biol. Chem.">
        <title>Structural Basis for Toughness and Flexibility in the C-terminal Passenger Domain of an Acinetobacter Trimeric Autotransporter Adhesin.</title>
        <authorList>
            <person name="Koiwai K."/>
            <person name="Hartmann M.D."/>
            <person name="Linke D."/>
            <person name="Lupas A.N."/>
            <person name="Hori K."/>
        </authorList>
    </citation>
    <scope>X-RAY CRYSTALLOGRAPHY (1.97 ANGSTROMS) OF 2905-3168</scope>
    <scope>X-RAY CRYSTALLOGRAPHY (1.79 ANGSTROMS) OF 3170-3561</scope>
    <scope>SUBUNIT</scope>
    <scope>DOMAIN</scope>
    <scope>MUTAGENESIS OF PRO-3061</scope>
    <source>
        <strain>Tol 5</strain>
    </source>
</reference>
<keyword id="KW-0002">3D-structure</keyword>
<keyword id="KW-0130">Cell adhesion</keyword>
<keyword id="KW-0998">Cell outer membrane</keyword>
<keyword id="KW-0472">Membrane</keyword>
<keyword id="KW-0653">Protein transport</keyword>
<keyword id="KW-0732">Signal</keyword>
<keyword id="KW-0812">Transmembrane</keyword>
<keyword id="KW-1134">Transmembrane beta strand</keyword>
<keyword id="KW-0813">Transport</keyword>
<name>ATAA_ACIS5</name>